<protein>
    <recommendedName>
        <fullName evidence="1">Nitrogenase-stabilizing/protective protein NifW</fullName>
    </recommendedName>
</protein>
<dbReference type="EMBL" id="CP000529">
    <property type="protein sequence ID" value="ABM37620.1"/>
    <property type="molecule type" value="Genomic_DNA"/>
</dbReference>
<dbReference type="RefSeq" id="WP_011801698.1">
    <property type="nucleotide sequence ID" value="NC_008781.1"/>
</dbReference>
<dbReference type="SMR" id="A1VPP2"/>
<dbReference type="STRING" id="365044.Pnap_2312"/>
<dbReference type="KEGG" id="pna:Pnap_2312"/>
<dbReference type="eggNOG" id="ENOG50330W8">
    <property type="taxonomic scope" value="Bacteria"/>
</dbReference>
<dbReference type="HOGENOM" id="CLU_145318_1_0_4"/>
<dbReference type="OrthoDB" id="9811868at2"/>
<dbReference type="Proteomes" id="UP000000644">
    <property type="component" value="Chromosome"/>
</dbReference>
<dbReference type="GO" id="GO:0009399">
    <property type="term" value="P:nitrogen fixation"/>
    <property type="evidence" value="ECO:0007669"/>
    <property type="project" value="UniProtKB-UniRule"/>
</dbReference>
<dbReference type="HAMAP" id="MF_00529">
    <property type="entry name" value="NifW"/>
    <property type="match status" value="1"/>
</dbReference>
<dbReference type="InterPro" id="IPR004893">
    <property type="entry name" value="NifW"/>
</dbReference>
<dbReference type="NCBIfam" id="NF002009">
    <property type="entry name" value="PRK00810.1"/>
    <property type="match status" value="1"/>
</dbReference>
<dbReference type="Pfam" id="PF03206">
    <property type="entry name" value="NifW"/>
    <property type="match status" value="1"/>
</dbReference>
<dbReference type="PIRSF" id="PIRSF005790">
    <property type="entry name" value="NifW"/>
    <property type="match status" value="1"/>
</dbReference>
<evidence type="ECO:0000255" key="1">
    <source>
        <dbReference type="HAMAP-Rule" id="MF_00529"/>
    </source>
</evidence>
<comment type="function">
    <text evidence="1">May protect the nitrogenase Fe-Mo protein from oxidative damage.</text>
</comment>
<comment type="subunit">
    <text evidence="1">Homotrimer; associates with NifD.</text>
</comment>
<comment type="similarity">
    <text evidence="1">Belongs to the NifW family.</text>
</comment>
<feature type="chain" id="PRO_1000060969" description="Nitrogenase-stabilizing/protective protein NifW">
    <location>
        <begin position="1"/>
        <end position="113"/>
    </location>
</feature>
<reference key="1">
    <citation type="journal article" date="2009" name="Environ. Microbiol.">
        <title>The genome of Polaromonas naphthalenivorans strain CJ2, isolated from coal tar-contaminated sediment, reveals physiological and metabolic versatility and evolution through extensive horizontal gene transfer.</title>
        <authorList>
            <person name="Yagi J.M."/>
            <person name="Sims D."/>
            <person name="Brettin T."/>
            <person name="Bruce D."/>
            <person name="Madsen E.L."/>
        </authorList>
    </citation>
    <scope>NUCLEOTIDE SEQUENCE [LARGE SCALE GENOMIC DNA]</scope>
    <source>
        <strain>CJ2</strain>
    </source>
</reference>
<sequence length="113" mass="13077">MENFLQQLKTLSSAEDFMQYFGVPFDQKVMNISRLHILKRFFQYLRQETPLAQTDELQMFTAYRALLTKAYGDFVTSTPAQEKVFKVFQDTDGKQHVTLDSLRASMPQRAAAA</sequence>
<keyword id="KW-0535">Nitrogen fixation</keyword>
<keyword id="KW-1185">Reference proteome</keyword>
<proteinExistence type="inferred from homology"/>
<name>NIFW_POLNA</name>
<gene>
    <name evidence="1" type="primary">nifW</name>
    <name type="ordered locus">Pnap_2312</name>
</gene>
<organism>
    <name type="scientific">Polaromonas naphthalenivorans (strain CJ2)</name>
    <dbReference type="NCBI Taxonomy" id="365044"/>
    <lineage>
        <taxon>Bacteria</taxon>
        <taxon>Pseudomonadati</taxon>
        <taxon>Pseudomonadota</taxon>
        <taxon>Betaproteobacteria</taxon>
        <taxon>Burkholderiales</taxon>
        <taxon>Comamonadaceae</taxon>
        <taxon>Polaromonas</taxon>
    </lineage>
</organism>
<accession>A1VPP2</accession>